<comment type="function">
    <text evidence="1">The RuvA-RuvB-RuvC complex processes Holliday junction (HJ) DNA during genetic recombination and DNA repair, while the RuvA-RuvB complex plays an important role in the rescue of blocked DNA replication forks via replication fork reversal (RFR). RuvA specifically binds to HJ cruciform DNA, conferring on it an open structure. The RuvB hexamer acts as an ATP-dependent pump, pulling dsDNA into and through the RuvAB complex. RuvB forms 2 homohexamers on either side of HJ DNA bound by 1 or 2 RuvA tetramers; 4 subunits per hexamer contact DNA at a time. Coordinated motions by a converter formed by DNA-disengaged RuvB subunits stimulates ATP hydrolysis and nucleotide exchange. Immobilization of the converter enables RuvB to convert the ATP-contained energy into a lever motion, pulling 2 nucleotides of DNA out of the RuvA tetramer per ATP hydrolyzed, thus driving DNA branch migration. The RuvB motors rotate together with the DNA substrate, which together with the progressing nucleotide cycle form the mechanistic basis for DNA recombination by continuous HJ branch migration. Branch migration allows RuvC to scan DNA until it finds its consensus sequence, where it cleaves and resolves cruciform DNA.</text>
</comment>
<comment type="catalytic activity">
    <reaction evidence="1">
        <text>ATP + H2O = ADP + phosphate + H(+)</text>
        <dbReference type="Rhea" id="RHEA:13065"/>
        <dbReference type="ChEBI" id="CHEBI:15377"/>
        <dbReference type="ChEBI" id="CHEBI:15378"/>
        <dbReference type="ChEBI" id="CHEBI:30616"/>
        <dbReference type="ChEBI" id="CHEBI:43474"/>
        <dbReference type="ChEBI" id="CHEBI:456216"/>
    </reaction>
</comment>
<comment type="subunit">
    <text evidence="1">Homohexamer. Forms an RuvA(8)-RuvB(12)-Holliday junction (HJ) complex. HJ DNA is sandwiched between 2 RuvA tetramers; dsDNA enters through RuvA and exits via RuvB. An RuvB hexamer assembles on each DNA strand where it exits the tetramer. Each RuvB hexamer is contacted by two RuvA subunits (via domain III) on 2 adjacent RuvB subunits; this complex drives branch migration. In the full resolvosome a probable DNA-RuvA(4)-RuvB(12)-RuvC(2) complex forms which resolves the HJ.</text>
</comment>
<comment type="subcellular location">
    <subcellularLocation>
        <location evidence="1">Cytoplasm</location>
    </subcellularLocation>
</comment>
<comment type="domain">
    <text evidence="1">Has 3 domains, the large (RuvB-L) and small ATPase (RuvB-S) domains and the C-terminal head (RuvB-H) domain. The head domain binds DNA, while the ATPase domains jointly bind ATP, ADP or are empty depending on the state of the subunit in the translocation cycle. During a single DNA translocation step the structure of each domain remains the same, but their relative positions change.</text>
</comment>
<comment type="similarity">
    <text evidence="1">Belongs to the RuvB family.</text>
</comment>
<protein>
    <recommendedName>
        <fullName evidence="1">Holliday junction branch migration complex subunit RuvB</fullName>
        <ecNumber evidence="1">3.6.4.-</ecNumber>
    </recommendedName>
</protein>
<evidence type="ECO:0000255" key="1">
    <source>
        <dbReference type="HAMAP-Rule" id="MF_00016"/>
    </source>
</evidence>
<sequence length="332" mass="37307">MSRILDNEMMGDEELVERTLRPQYLREYIGQDKVKDQLQIFIEAAKMRDEALDHVLLFGPPGLGKTTMAFVIANELGVNLKQTSGPVIEKAGDLVAILNELEPGDVLFIDEIHRLPMSVEEVLYSAMEDFYIDIMIGAGEGSRSVHLELPPFTLIGATTRAGMLSNPLRARFGITGHMEYYAHADLTEIVERTADIFEMEITHEAASELALRSRGTPRIANRLLKRVRDFAQIMGNGVIDDIITDKALTMLDVDHEGLDYVDQKILRTMIEMYSGGPVGLGTLSVNIAEERETVEDMYEPYLIQKGFIMRTRSGRVATAKAYEHLGYEYSEK</sequence>
<keyword id="KW-0067">ATP-binding</keyword>
<keyword id="KW-0963">Cytoplasm</keyword>
<keyword id="KW-0227">DNA damage</keyword>
<keyword id="KW-0233">DNA recombination</keyword>
<keyword id="KW-0234">DNA repair</keyword>
<keyword id="KW-0238">DNA-binding</keyword>
<keyword id="KW-0378">Hydrolase</keyword>
<keyword id="KW-0547">Nucleotide-binding</keyword>
<accession>B5E6T3</accession>
<feature type="chain" id="PRO_1000089683" description="Holliday junction branch migration complex subunit RuvB">
    <location>
        <begin position="1"/>
        <end position="332"/>
    </location>
</feature>
<feature type="region of interest" description="Large ATPase domain (RuvB-L)" evidence="1">
    <location>
        <begin position="1"/>
        <end position="181"/>
    </location>
</feature>
<feature type="region of interest" description="Small ATPAse domain (RuvB-S)" evidence="1">
    <location>
        <begin position="182"/>
        <end position="252"/>
    </location>
</feature>
<feature type="region of interest" description="Head domain (RuvB-H)" evidence="1">
    <location>
        <begin position="255"/>
        <end position="332"/>
    </location>
</feature>
<feature type="binding site" evidence="1">
    <location>
        <position position="20"/>
    </location>
    <ligand>
        <name>ATP</name>
        <dbReference type="ChEBI" id="CHEBI:30616"/>
    </ligand>
</feature>
<feature type="binding site" evidence="1">
    <location>
        <position position="21"/>
    </location>
    <ligand>
        <name>ATP</name>
        <dbReference type="ChEBI" id="CHEBI:30616"/>
    </ligand>
</feature>
<feature type="binding site" evidence="1">
    <location>
        <position position="62"/>
    </location>
    <ligand>
        <name>ATP</name>
        <dbReference type="ChEBI" id="CHEBI:30616"/>
    </ligand>
</feature>
<feature type="binding site" evidence="1">
    <location>
        <position position="65"/>
    </location>
    <ligand>
        <name>ATP</name>
        <dbReference type="ChEBI" id="CHEBI:30616"/>
    </ligand>
</feature>
<feature type="binding site" evidence="1">
    <location>
        <position position="66"/>
    </location>
    <ligand>
        <name>ATP</name>
        <dbReference type="ChEBI" id="CHEBI:30616"/>
    </ligand>
</feature>
<feature type="binding site" evidence="1">
    <location>
        <position position="66"/>
    </location>
    <ligand>
        <name>Mg(2+)</name>
        <dbReference type="ChEBI" id="CHEBI:18420"/>
    </ligand>
</feature>
<feature type="binding site" evidence="1">
    <location>
        <position position="67"/>
    </location>
    <ligand>
        <name>ATP</name>
        <dbReference type="ChEBI" id="CHEBI:30616"/>
    </ligand>
</feature>
<feature type="binding site" evidence="1">
    <location>
        <begin position="128"/>
        <end position="130"/>
    </location>
    <ligand>
        <name>ATP</name>
        <dbReference type="ChEBI" id="CHEBI:30616"/>
    </ligand>
</feature>
<feature type="binding site" evidence="1">
    <location>
        <position position="171"/>
    </location>
    <ligand>
        <name>ATP</name>
        <dbReference type="ChEBI" id="CHEBI:30616"/>
    </ligand>
</feature>
<feature type="binding site" evidence="1">
    <location>
        <position position="181"/>
    </location>
    <ligand>
        <name>ATP</name>
        <dbReference type="ChEBI" id="CHEBI:30616"/>
    </ligand>
</feature>
<feature type="binding site" evidence="1">
    <location>
        <position position="218"/>
    </location>
    <ligand>
        <name>ATP</name>
        <dbReference type="ChEBI" id="CHEBI:30616"/>
    </ligand>
</feature>
<feature type="binding site" evidence="1">
    <location>
        <position position="291"/>
    </location>
    <ligand>
        <name>DNA</name>
        <dbReference type="ChEBI" id="CHEBI:16991"/>
    </ligand>
</feature>
<feature type="binding site" evidence="1">
    <location>
        <position position="310"/>
    </location>
    <ligand>
        <name>DNA</name>
        <dbReference type="ChEBI" id="CHEBI:16991"/>
    </ligand>
</feature>
<feature type="binding site" evidence="1">
    <location>
        <position position="312"/>
    </location>
    <ligand>
        <name>DNA</name>
        <dbReference type="ChEBI" id="CHEBI:16991"/>
    </ligand>
</feature>
<feature type="binding site" evidence="1">
    <location>
        <position position="315"/>
    </location>
    <ligand>
        <name>DNA</name>
        <dbReference type="ChEBI" id="CHEBI:16991"/>
    </ligand>
</feature>
<organism>
    <name type="scientific">Streptococcus pneumoniae serotype 19F (strain G54)</name>
    <dbReference type="NCBI Taxonomy" id="512566"/>
    <lineage>
        <taxon>Bacteria</taxon>
        <taxon>Bacillati</taxon>
        <taxon>Bacillota</taxon>
        <taxon>Bacilli</taxon>
        <taxon>Lactobacillales</taxon>
        <taxon>Streptococcaceae</taxon>
        <taxon>Streptococcus</taxon>
    </lineage>
</organism>
<dbReference type="EC" id="3.6.4.-" evidence="1"/>
<dbReference type="EMBL" id="CP001015">
    <property type="protein sequence ID" value="ACF55795.1"/>
    <property type="molecule type" value="Genomic_DNA"/>
</dbReference>
<dbReference type="SMR" id="B5E6T3"/>
<dbReference type="KEGG" id="spx:SPG_0244"/>
<dbReference type="HOGENOM" id="CLU_055599_1_0_9"/>
<dbReference type="GO" id="GO:0005737">
    <property type="term" value="C:cytoplasm"/>
    <property type="evidence" value="ECO:0007669"/>
    <property type="project" value="UniProtKB-SubCell"/>
</dbReference>
<dbReference type="GO" id="GO:0048476">
    <property type="term" value="C:Holliday junction resolvase complex"/>
    <property type="evidence" value="ECO:0007669"/>
    <property type="project" value="UniProtKB-UniRule"/>
</dbReference>
<dbReference type="GO" id="GO:0005524">
    <property type="term" value="F:ATP binding"/>
    <property type="evidence" value="ECO:0007669"/>
    <property type="project" value="UniProtKB-UniRule"/>
</dbReference>
<dbReference type="GO" id="GO:0016887">
    <property type="term" value="F:ATP hydrolysis activity"/>
    <property type="evidence" value="ECO:0007669"/>
    <property type="project" value="InterPro"/>
</dbReference>
<dbReference type="GO" id="GO:0000400">
    <property type="term" value="F:four-way junction DNA binding"/>
    <property type="evidence" value="ECO:0007669"/>
    <property type="project" value="UniProtKB-UniRule"/>
</dbReference>
<dbReference type="GO" id="GO:0009378">
    <property type="term" value="F:four-way junction helicase activity"/>
    <property type="evidence" value="ECO:0007669"/>
    <property type="project" value="InterPro"/>
</dbReference>
<dbReference type="GO" id="GO:0006310">
    <property type="term" value="P:DNA recombination"/>
    <property type="evidence" value="ECO:0007669"/>
    <property type="project" value="UniProtKB-UniRule"/>
</dbReference>
<dbReference type="GO" id="GO:0006281">
    <property type="term" value="P:DNA repair"/>
    <property type="evidence" value="ECO:0007669"/>
    <property type="project" value="UniProtKB-UniRule"/>
</dbReference>
<dbReference type="CDD" id="cd00009">
    <property type="entry name" value="AAA"/>
    <property type="match status" value="1"/>
</dbReference>
<dbReference type="Gene3D" id="1.10.8.60">
    <property type="match status" value="1"/>
</dbReference>
<dbReference type="Gene3D" id="3.40.50.300">
    <property type="entry name" value="P-loop containing nucleotide triphosphate hydrolases"/>
    <property type="match status" value="1"/>
</dbReference>
<dbReference type="Gene3D" id="1.10.10.10">
    <property type="entry name" value="Winged helix-like DNA-binding domain superfamily/Winged helix DNA-binding domain"/>
    <property type="match status" value="1"/>
</dbReference>
<dbReference type="HAMAP" id="MF_00016">
    <property type="entry name" value="DNA_HJ_migration_RuvB"/>
    <property type="match status" value="1"/>
</dbReference>
<dbReference type="InterPro" id="IPR003593">
    <property type="entry name" value="AAA+_ATPase"/>
</dbReference>
<dbReference type="InterPro" id="IPR041445">
    <property type="entry name" value="AAA_lid_4"/>
</dbReference>
<dbReference type="InterPro" id="IPR004605">
    <property type="entry name" value="DNA_helicase_Holl-junc_RuvB"/>
</dbReference>
<dbReference type="InterPro" id="IPR027417">
    <property type="entry name" value="P-loop_NTPase"/>
</dbReference>
<dbReference type="InterPro" id="IPR008824">
    <property type="entry name" value="RuvB-like_N"/>
</dbReference>
<dbReference type="InterPro" id="IPR008823">
    <property type="entry name" value="RuvB_C"/>
</dbReference>
<dbReference type="InterPro" id="IPR036388">
    <property type="entry name" value="WH-like_DNA-bd_sf"/>
</dbReference>
<dbReference type="InterPro" id="IPR036390">
    <property type="entry name" value="WH_DNA-bd_sf"/>
</dbReference>
<dbReference type="NCBIfam" id="NF000868">
    <property type="entry name" value="PRK00080.1"/>
    <property type="match status" value="1"/>
</dbReference>
<dbReference type="NCBIfam" id="TIGR00635">
    <property type="entry name" value="ruvB"/>
    <property type="match status" value="1"/>
</dbReference>
<dbReference type="PANTHER" id="PTHR42848">
    <property type="match status" value="1"/>
</dbReference>
<dbReference type="PANTHER" id="PTHR42848:SF1">
    <property type="entry name" value="HOLLIDAY JUNCTION BRANCH MIGRATION COMPLEX SUBUNIT RUVB"/>
    <property type="match status" value="1"/>
</dbReference>
<dbReference type="Pfam" id="PF17864">
    <property type="entry name" value="AAA_lid_4"/>
    <property type="match status" value="1"/>
</dbReference>
<dbReference type="Pfam" id="PF05491">
    <property type="entry name" value="RuvB_C"/>
    <property type="match status" value="1"/>
</dbReference>
<dbReference type="Pfam" id="PF05496">
    <property type="entry name" value="RuvB_N"/>
    <property type="match status" value="1"/>
</dbReference>
<dbReference type="SMART" id="SM00382">
    <property type="entry name" value="AAA"/>
    <property type="match status" value="1"/>
</dbReference>
<dbReference type="SUPFAM" id="SSF52540">
    <property type="entry name" value="P-loop containing nucleoside triphosphate hydrolases"/>
    <property type="match status" value="1"/>
</dbReference>
<dbReference type="SUPFAM" id="SSF46785">
    <property type="entry name" value="Winged helix' DNA-binding domain"/>
    <property type="match status" value="1"/>
</dbReference>
<reference key="1">
    <citation type="journal article" date="2001" name="Microb. Drug Resist.">
        <title>Annotated draft genomic sequence from a Streptococcus pneumoniae type 19F clinical isolate.</title>
        <authorList>
            <person name="Dopazo J."/>
            <person name="Mendoza A."/>
            <person name="Herrero J."/>
            <person name="Caldara F."/>
            <person name="Humbert Y."/>
            <person name="Friedli L."/>
            <person name="Guerrier M."/>
            <person name="Grand-Schenk E."/>
            <person name="Gandin C."/>
            <person name="de Francesco M."/>
            <person name="Polissi A."/>
            <person name="Buell G."/>
            <person name="Feger G."/>
            <person name="Garcia E."/>
            <person name="Peitsch M."/>
            <person name="Garcia-Bustos J.F."/>
        </authorList>
    </citation>
    <scope>NUCLEOTIDE SEQUENCE [LARGE SCALE GENOMIC DNA]</scope>
    <source>
        <strain>G54</strain>
    </source>
</reference>
<reference key="2">
    <citation type="submission" date="2008-03" db="EMBL/GenBank/DDBJ databases">
        <title>Pneumococcal beta glucoside metabolism investigated by whole genome comparison.</title>
        <authorList>
            <person name="Mulas L."/>
            <person name="Trappetti C."/>
            <person name="Hakenbeck R."/>
            <person name="Iannelli F."/>
            <person name="Pozzi G."/>
            <person name="Davidsen T.M."/>
            <person name="Tettelin H."/>
            <person name="Oggioni M."/>
        </authorList>
    </citation>
    <scope>NUCLEOTIDE SEQUENCE [LARGE SCALE GENOMIC DNA]</scope>
    <source>
        <strain>G54</strain>
    </source>
</reference>
<gene>
    <name evidence="1" type="primary">ruvB</name>
    <name type="ordered locus">SPG_0244</name>
</gene>
<name>RUVB_STRP4</name>
<proteinExistence type="inferred from homology"/>